<accession>Q9TF47</accession>
<accession>Q9TF41</accession>
<comment type="function">
    <text evidence="2">Component of the ubiquinol-cytochrome c reductase complex (complex III or cytochrome b-c1 complex) that is part of the mitochondrial respiratory chain. The b-c1 complex mediates electron transfer from ubiquinol to cytochrome c. Contributes to the generation of a proton gradient across the mitochondrial membrane that is then used for ATP synthesis.</text>
</comment>
<comment type="cofactor">
    <cofactor evidence="2">
        <name>heme b</name>
        <dbReference type="ChEBI" id="CHEBI:60344"/>
    </cofactor>
    <text evidence="2">Binds 2 heme b groups non-covalently.</text>
</comment>
<comment type="subunit">
    <text evidence="2">The cytochrome bc1 complex contains 11 subunits: 3 respiratory subunits (MT-CYB, CYC1 and UQCRFS1), 2 core proteins (UQCRC1 and UQCRC2) and 6 low-molecular weight proteins (UQCRH/QCR6, UQCRB/QCR7, UQCRQ/QCR8, UQCR10/QCR9, UQCR11/QCR10 and a cleavage product of UQCRFS1). This cytochrome bc1 complex then forms a dimer.</text>
</comment>
<comment type="subcellular location">
    <subcellularLocation>
        <location evidence="2">Mitochondrion inner membrane</location>
        <topology evidence="2">Multi-pass membrane protein</topology>
    </subcellularLocation>
</comment>
<comment type="miscellaneous">
    <text evidence="1">Heme 1 (or BL or b562) is low-potential and absorbs at about 562 nm, and heme 2 (or BH or b566) is high-potential and absorbs at about 566 nm.</text>
</comment>
<comment type="similarity">
    <text evidence="3 4">Belongs to the cytochrome b family.</text>
</comment>
<comment type="caution">
    <text evidence="2">The full-length protein contains only eight transmembrane helices, not nine as predicted by bioinformatics tools.</text>
</comment>
<feature type="chain" id="PRO_0000255142" description="Cytochrome b">
    <location>
        <begin position="1"/>
        <end position="379"/>
    </location>
</feature>
<feature type="transmembrane region" description="Helical" evidence="2">
    <location>
        <begin position="33"/>
        <end position="53"/>
    </location>
</feature>
<feature type="transmembrane region" description="Helical" evidence="2">
    <location>
        <begin position="77"/>
        <end position="98"/>
    </location>
</feature>
<feature type="transmembrane region" description="Helical" evidence="2">
    <location>
        <begin position="113"/>
        <end position="133"/>
    </location>
</feature>
<feature type="transmembrane region" description="Helical" evidence="2">
    <location>
        <begin position="178"/>
        <end position="198"/>
    </location>
</feature>
<feature type="transmembrane region" description="Helical" evidence="2">
    <location>
        <begin position="226"/>
        <end position="246"/>
    </location>
</feature>
<feature type="transmembrane region" description="Helical" evidence="2">
    <location>
        <begin position="288"/>
        <end position="308"/>
    </location>
</feature>
<feature type="transmembrane region" description="Helical" evidence="2">
    <location>
        <begin position="320"/>
        <end position="340"/>
    </location>
</feature>
<feature type="transmembrane region" description="Helical" evidence="2">
    <location>
        <begin position="347"/>
        <end position="367"/>
    </location>
</feature>
<feature type="binding site" description="axial binding residue" evidence="2">
    <location>
        <position position="83"/>
    </location>
    <ligand>
        <name>heme b</name>
        <dbReference type="ChEBI" id="CHEBI:60344"/>
        <label>b562</label>
    </ligand>
    <ligandPart>
        <name>Fe</name>
        <dbReference type="ChEBI" id="CHEBI:18248"/>
    </ligandPart>
</feature>
<feature type="binding site" description="axial binding residue" evidence="2">
    <location>
        <position position="97"/>
    </location>
    <ligand>
        <name>heme b</name>
        <dbReference type="ChEBI" id="CHEBI:60344"/>
        <label>b566</label>
    </ligand>
    <ligandPart>
        <name>Fe</name>
        <dbReference type="ChEBI" id="CHEBI:18248"/>
    </ligandPart>
</feature>
<feature type="binding site" description="axial binding residue" evidence="2">
    <location>
        <position position="182"/>
    </location>
    <ligand>
        <name>heme b</name>
        <dbReference type="ChEBI" id="CHEBI:60344"/>
        <label>b562</label>
    </ligand>
    <ligandPart>
        <name>Fe</name>
        <dbReference type="ChEBI" id="CHEBI:18248"/>
    </ligandPart>
</feature>
<feature type="binding site" description="axial binding residue" evidence="2">
    <location>
        <position position="196"/>
    </location>
    <ligand>
        <name>heme b</name>
        <dbReference type="ChEBI" id="CHEBI:60344"/>
        <label>b566</label>
    </ligand>
    <ligandPart>
        <name>Fe</name>
        <dbReference type="ChEBI" id="CHEBI:18248"/>
    </ligandPart>
</feature>
<feature type="binding site" evidence="2">
    <location>
        <position position="201"/>
    </location>
    <ligand>
        <name>a ubiquinone</name>
        <dbReference type="ChEBI" id="CHEBI:16389"/>
    </ligand>
</feature>
<feature type="sequence variant" description="In strain: Isolate S60.">
    <original>L</original>
    <variation>M</variation>
    <location>
        <position position="306"/>
    </location>
</feature>
<feature type="sequence variant" description="In strain: Isolate S60.">
    <original>I</original>
    <variation>T</variation>
    <location>
        <position position="360"/>
    </location>
</feature>
<name>CYB_UROUN</name>
<dbReference type="EMBL" id="AF157906">
    <property type="protein sequence ID" value="AAD50190.1"/>
    <property type="molecule type" value="Genomic_DNA"/>
</dbReference>
<dbReference type="EMBL" id="AF157912">
    <property type="protein sequence ID" value="AAD50196.1"/>
    <property type="molecule type" value="Genomic_DNA"/>
</dbReference>
<dbReference type="SMR" id="Q9TF47"/>
<dbReference type="GO" id="GO:0005743">
    <property type="term" value="C:mitochondrial inner membrane"/>
    <property type="evidence" value="ECO:0007669"/>
    <property type="project" value="UniProtKB-SubCell"/>
</dbReference>
<dbReference type="GO" id="GO:0045275">
    <property type="term" value="C:respiratory chain complex III"/>
    <property type="evidence" value="ECO:0007669"/>
    <property type="project" value="InterPro"/>
</dbReference>
<dbReference type="GO" id="GO:0046872">
    <property type="term" value="F:metal ion binding"/>
    <property type="evidence" value="ECO:0007669"/>
    <property type="project" value="UniProtKB-KW"/>
</dbReference>
<dbReference type="GO" id="GO:0008121">
    <property type="term" value="F:ubiquinol-cytochrome-c reductase activity"/>
    <property type="evidence" value="ECO:0007669"/>
    <property type="project" value="InterPro"/>
</dbReference>
<dbReference type="GO" id="GO:0006122">
    <property type="term" value="P:mitochondrial electron transport, ubiquinol to cytochrome c"/>
    <property type="evidence" value="ECO:0007669"/>
    <property type="project" value="TreeGrafter"/>
</dbReference>
<dbReference type="CDD" id="cd00290">
    <property type="entry name" value="cytochrome_b_C"/>
    <property type="match status" value="1"/>
</dbReference>
<dbReference type="CDD" id="cd00284">
    <property type="entry name" value="Cytochrome_b_N"/>
    <property type="match status" value="1"/>
</dbReference>
<dbReference type="FunFam" id="1.20.810.10:FF:000002">
    <property type="entry name" value="Cytochrome b"/>
    <property type="match status" value="1"/>
</dbReference>
<dbReference type="Gene3D" id="1.20.810.10">
    <property type="entry name" value="Cytochrome Bc1 Complex, Chain C"/>
    <property type="match status" value="1"/>
</dbReference>
<dbReference type="InterPro" id="IPR005798">
    <property type="entry name" value="Cyt_b/b6_C"/>
</dbReference>
<dbReference type="InterPro" id="IPR036150">
    <property type="entry name" value="Cyt_b/b6_C_sf"/>
</dbReference>
<dbReference type="InterPro" id="IPR005797">
    <property type="entry name" value="Cyt_b/b6_N"/>
</dbReference>
<dbReference type="InterPro" id="IPR027387">
    <property type="entry name" value="Cytb/b6-like_sf"/>
</dbReference>
<dbReference type="InterPro" id="IPR030689">
    <property type="entry name" value="Cytochrome_b"/>
</dbReference>
<dbReference type="InterPro" id="IPR048260">
    <property type="entry name" value="Cytochrome_b_C_euk/bac"/>
</dbReference>
<dbReference type="InterPro" id="IPR048259">
    <property type="entry name" value="Cytochrome_b_N_euk/bac"/>
</dbReference>
<dbReference type="InterPro" id="IPR016174">
    <property type="entry name" value="Di-haem_cyt_TM"/>
</dbReference>
<dbReference type="PANTHER" id="PTHR19271">
    <property type="entry name" value="CYTOCHROME B"/>
    <property type="match status" value="1"/>
</dbReference>
<dbReference type="PANTHER" id="PTHR19271:SF16">
    <property type="entry name" value="CYTOCHROME B"/>
    <property type="match status" value="1"/>
</dbReference>
<dbReference type="Pfam" id="PF00032">
    <property type="entry name" value="Cytochrom_B_C"/>
    <property type="match status" value="1"/>
</dbReference>
<dbReference type="Pfam" id="PF00033">
    <property type="entry name" value="Cytochrome_B"/>
    <property type="match status" value="1"/>
</dbReference>
<dbReference type="PIRSF" id="PIRSF038885">
    <property type="entry name" value="COB"/>
    <property type="match status" value="1"/>
</dbReference>
<dbReference type="SUPFAM" id="SSF81648">
    <property type="entry name" value="a domain/subunit of cytochrome bc1 complex (Ubiquinol-cytochrome c reductase)"/>
    <property type="match status" value="1"/>
</dbReference>
<dbReference type="SUPFAM" id="SSF81342">
    <property type="entry name" value="Transmembrane di-heme cytochromes"/>
    <property type="match status" value="1"/>
</dbReference>
<dbReference type="PROSITE" id="PS51003">
    <property type="entry name" value="CYTB_CTER"/>
    <property type="match status" value="1"/>
</dbReference>
<dbReference type="PROSITE" id="PS51002">
    <property type="entry name" value="CYTB_NTER"/>
    <property type="match status" value="1"/>
</dbReference>
<proteinExistence type="inferred from homology"/>
<sequence>MTNTRKTHPLIKIINHSFIDLPAPSNISAWWNFGSLLGLCLAIQILTGLFLAMHYTSDTMTAFSSVTHICRDVNYGWLIRYMHANGASMFFICLFLHVGRGLYYGSYTYFETWNIGVILLFVVMATAFMGYVLPWGQMSFWGATVITNLLSAIPYIGTTLVEWIWGGFSVDKATLTRFFAFHFILPFIIAALVMVHLLFLHETGSNNPSGLISNSDKIPFHPYYTIKDILGVFLLILVLMTLVLFSPDLLGDPDNYMPANPLSTPPHIKPEWYFLFAYAILRSIPNKLGGVLALVFSILILMLFPLLHLSKQRSMMFRPLSQCMFWILVADLFTLTWIGGQPVEHPFIIIGQLASILYFIIILLILPAVSLIENKLLKW</sequence>
<keyword id="KW-0249">Electron transport</keyword>
<keyword id="KW-0349">Heme</keyword>
<keyword id="KW-0408">Iron</keyword>
<keyword id="KW-0472">Membrane</keyword>
<keyword id="KW-0479">Metal-binding</keyword>
<keyword id="KW-0496">Mitochondrion</keyword>
<keyword id="KW-0999">Mitochondrion inner membrane</keyword>
<keyword id="KW-0679">Respiratory chain</keyword>
<keyword id="KW-0812">Transmembrane</keyword>
<keyword id="KW-1133">Transmembrane helix</keyword>
<keyword id="KW-0813">Transport</keyword>
<keyword id="KW-0830">Ubiquinone</keyword>
<geneLocation type="mitochondrion"/>
<protein>
    <recommendedName>
        <fullName>Cytochrome b</fullName>
    </recommendedName>
    <alternativeName>
        <fullName>Complex III subunit 3</fullName>
    </alternativeName>
    <alternativeName>
        <fullName>Complex III subunit III</fullName>
    </alternativeName>
    <alternativeName>
        <fullName>Cytochrome b-c1 complex subunit 3</fullName>
    </alternativeName>
    <alternativeName>
        <fullName>Ubiquinol-cytochrome-c reductase complex cytochrome b subunit</fullName>
    </alternativeName>
</protein>
<evidence type="ECO:0000250" key="1"/>
<evidence type="ECO:0000250" key="2">
    <source>
        <dbReference type="UniProtKB" id="P00157"/>
    </source>
</evidence>
<evidence type="ECO:0000255" key="3">
    <source>
        <dbReference type="PROSITE-ProRule" id="PRU00967"/>
    </source>
</evidence>
<evidence type="ECO:0000255" key="4">
    <source>
        <dbReference type="PROSITE-ProRule" id="PRU00968"/>
    </source>
</evidence>
<organism>
    <name type="scientific">Urocitellus undulatus</name>
    <name type="common">Long-tailed ground squirrel</name>
    <name type="synonym">Spermophilus undulatus</name>
    <dbReference type="NCBI Taxonomy" id="99867"/>
    <lineage>
        <taxon>Eukaryota</taxon>
        <taxon>Metazoa</taxon>
        <taxon>Chordata</taxon>
        <taxon>Craniata</taxon>
        <taxon>Vertebrata</taxon>
        <taxon>Euteleostomi</taxon>
        <taxon>Mammalia</taxon>
        <taxon>Eutheria</taxon>
        <taxon>Euarchontoglires</taxon>
        <taxon>Glires</taxon>
        <taxon>Rodentia</taxon>
        <taxon>Sciuromorpha</taxon>
        <taxon>Sciuridae</taxon>
        <taxon>Xerinae</taxon>
        <taxon>Marmotini</taxon>
        <taxon>Urocitellus</taxon>
    </lineage>
</organism>
<reference key="1">
    <citation type="journal article" date="2003" name="J. Mammal. Evol.">
        <title>Phylogeny and evolutionary history of the ground squirrels (Rodentia: Marmotinae).</title>
        <authorList>
            <person name="Harrison R.G."/>
            <person name="Bogdanowicz S.M."/>
            <person name="Hoffmann R.S."/>
            <person name="Yensen E."/>
            <person name="Sherman P.W."/>
        </authorList>
    </citation>
    <scope>NUCLEOTIDE SEQUENCE [GENOMIC DNA]</scope>
    <source>
        <strain>Isolate S55</strain>
        <strain>Isolate S60</strain>
    </source>
</reference>
<gene>
    <name type="primary">MT-CYB</name>
    <name type="synonym">COB</name>
    <name type="synonym">CYTB</name>
    <name type="synonym">MTCYB</name>
</gene>